<accession>Q05635</accession>
<accession>D6VSQ9</accession>
<accession>Q6Q5R1</accession>
<gene>
    <name type="primary">RNH202</name>
    <name type="ordered locus">YDR279W</name>
</gene>
<feature type="chain" id="PRO_0000248383" description="Ribonuclease H2 subunit B">
    <location>
        <begin position="1"/>
        <end position="350"/>
    </location>
</feature>
<feature type="region of interest" description="Disordered" evidence="1">
    <location>
        <begin position="134"/>
        <end position="153"/>
    </location>
</feature>
<feature type="compositionally biased region" description="Polar residues" evidence="1">
    <location>
        <begin position="134"/>
        <end position="151"/>
    </location>
</feature>
<feature type="sequence conflict" description="In Ref. 3; AAS56115." evidence="5" ref="3">
    <original>N</original>
    <variation>S</variation>
    <location>
        <position position="83"/>
    </location>
</feature>
<protein>
    <recommendedName>
        <fullName>Ribonuclease H2 subunit B</fullName>
        <shortName>RNase H2 subunit B</shortName>
        <shortName>Rnh2B</shortName>
    </recommendedName>
    <alternativeName>
        <fullName>RNase H(202)</fullName>
    </alternativeName>
    <alternativeName>
        <fullName>Ribonuclease HI subunit B</fullName>
    </alternativeName>
</protein>
<evidence type="ECO:0000256" key="1">
    <source>
        <dbReference type="SAM" id="MobiDB-lite"/>
    </source>
</evidence>
<evidence type="ECO:0000269" key="2">
    <source>
    </source>
</evidence>
<evidence type="ECO:0000269" key="3">
    <source>
    </source>
</evidence>
<evidence type="ECO:0000269" key="4">
    <source>
    </source>
</evidence>
<evidence type="ECO:0000305" key="5"/>
<proteinExistence type="evidence at protein level"/>
<name>RNH2B_YEAST</name>
<reference key="1">
    <citation type="journal article" date="1997" name="Nature">
        <title>The nucleotide sequence of Saccharomyces cerevisiae chromosome IV.</title>
        <authorList>
            <person name="Jacq C."/>
            <person name="Alt-Moerbe J."/>
            <person name="Andre B."/>
            <person name="Arnold W."/>
            <person name="Bahr A."/>
            <person name="Ballesta J.P.G."/>
            <person name="Bargues M."/>
            <person name="Baron L."/>
            <person name="Becker A."/>
            <person name="Biteau N."/>
            <person name="Bloecker H."/>
            <person name="Blugeon C."/>
            <person name="Boskovic J."/>
            <person name="Brandt P."/>
            <person name="Brueckner M."/>
            <person name="Buitrago M.J."/>
            <person name="Coster F."/>
            <person name="Delaveau T."/>
            <person name="del Rey F."/>
            <person name="Dujon B."/>
            <person name="Eide L.G."/>
            <person name="Garcia-Cantalejo J.M."/>
            <person name="Goffeau A."/>
            <person name="Gomez-Peris A."/>
            <person name="Granotier C."/>
            <person name="Hanemann V."/>
            <person name="Hankeln T."/>
            <person name="Hoheisel J.D."/>
            <person name="Jaeger W."/>
            <person name="Jimenez A."/>
            <person name="Jonniaux J.-L."/>
            <person name="Kraemer C."/>
            <person name="Kuester H."/>
            <person name="Laamanen P."/>
            <person name="Legros Y."/>
            <person name="Louis E.J."/>
            <person name="Moeller-Rieker S."/>
            <person name="Monnet A."/>
            <person name="Moro M."/>
            <person name="Mueller-Auer S."/>
            <person name="Nussbaumer B."/>
            <person name="Paricio N."/>
            <person name="Paulin L."/>
            <person name="Perea J."/>
            <person name="Perez-Alonso M."/>
            <person name="Perez-Ortin J.E."/>
            <person name="Pohl T.M."/>
            <person name="Prydz H."/>
            <person name="Purnelle B."/>
            <person name="Rasmussen S.W."/>
            <person name="Remacha M.A."/>
            <person name="Revuelta J.L."/>
            <person name="Rieger M."/>
            <person name="Salom D."/>
            <person name="Saluz H.P."/>
            <person name="Saiz J.E."/>
            <person name="Saren A.-M."/>
            <person name="Schaefer M."/>
            <person name="Scharfe M."/>
            <person name="Schmidt E.R."/>
            <person name="Schneider C."/>
            <person name="Scholler P."/>
            <person name="Schwarz S."/>
            <person name="Soler-Mira A."/>
            <person name="Urrestarazu L.A."/>
            <person name="Verhasselt P."/>
            <person name="Vissers S."/>
            <person name="Voet M."/>
            <person name="Volckaert G."/>
            <person name="Wagner G."/>
            <person name="Wambutt R."/>
            <person name="Wedler E."/>
            <person name="Wedler H."/>
            <person name="Woelfl S."/>
            <person name="Harris D.E."/>
            <person name="Bowman S."/>
            <person name="Brown D."/>
            <person name="Churcher C.M."/>
            <person name="Connor R."/>
            <person name="Dedman K."/>
            <person name="Gentles S."/>
            <person name="Hamlin N."/>
            <person name="Hunt S."/>
            <person name="Jones L."/>
            <person name="McDonald S."/>
            <person name="Murphy L.D."/>
            <person name="Niblett D."/>
            <person name="Odell C."/>
            <person name="Oliver K."/>
            <person name="Rajandream M.A."/>
            <person name="Richards C."/>
            <person name="Shore L."/>
            <person name="Walsh S.V."/>
            <person name="Barrell B.G."/>
            <person name="Dietrich F.S."/>
            <person name="Mulligan J.T."/>
            <person name="Allen E."/>
            <person name="Araujo R."/>
            <person name="Aviles E."/>
            <person name="Berno A."/>
            <person name="Carpenter J."/>
            <person name="Chen E."/>
            <person name="Cherry J.M."/>
            <person name="Chung E."/>
            <person name="Duncan M."/>
            <person name="Hunicke-Smith S."/>
            <person name="Hyman R.W."/>
            <person name="Komp C."/>
            <person name="Lashkari D."/>
            <person name="Lew H."/>
            <person name="Lin D."/>
            <person name="Mosedale D."/>
            <person name="Nakahara K."/>
            <person name="Namath A."/>
            <person name="Oefner P."/>
            <person name="Oh C."/>
            <person name="Petel F.X."/>
            <person name="Roberts D."/>
            <person name="Schramm S."/>
            <person name="Schroeder M."/>
            <person name="Shogren T."/>
            <person name="Shroff N."/>
            <person name="Winant A."/>
            <person name="Yelton M.A."/>
            <person name="Botstein D."/>
            <person name="Davis R.W."/>
            <person name="Johnston M."/>
            <person name="Andrews S."/>
            <person name="Brinkman R."/>
            <person name="Cooper J."/>
            <person name="Ding H."/>
            <person name="Du Z."/>
            <person name="Favello A."/>
            <person name="Fulton L."/>
            <person name="Gattung S."/>
            <person name="Greco T."/>
            <person name="Hallsworth K."/>
            <person name="Hawkins J."/>
            <person name="Hillier L.W."/>
            <person name="Jier M."/>
            <person name="Johnson D."/>
            <person name="Johnston L."/>
            <person name="Kirsten J."/>
            <person name="Kucaba T."/>
            <person name="Langston Y."/>
            <person name="Latreille P."/>
            <person name="Le T."/>
            <person name="Mardis E."/>
            <person name="Menezes S."/>
            <person name="Miller N."/>
            <person name="Nhan M."/>
            <person name="Pauley A."/>
            <person name="Peluso D."/>
            <person name="Rifkin L."/>
            <person name="Riles L."/>
            <person name="Taich A."/>
            <person name="Trevaskis E."/>
            <person name="Vignati D."/>
            <person name="Wilcox L."/>
            <person name="Wohldman P."/>
            <person name="Vaudin M."/>
            <person name="Wilson R."/>
            <person name="Waterston R."/>
            <person name="Albermann K."/>
            <person name="Hani J."/>
            <person name="Heumann K."/>
            <person name="Kleine K."/>
            <person name="Mewes H.-W."/>
            <person name="Zollner A."/>
            <person name="Zaccaria P."/>
        </authorList>
    </citation>
    <scope>NUCLEOTIDE SEQUENCE [LARGE SCALE GENOMIC DNA]</scope>
    <source>
        <strain>ATCC 204508 / S288c</strain>
    </source>
</reference>
<reference key="2">
    <citation type="journal article" date="2014" name="G3 (Bethesda)">
        <title>The reference genome sequence of Saccharomyces cerevisiae: Then and now.</title>
        <authorList>
            <person name="Engel S.R."/>
            <person name="Dietrich F.S."/>
            <person name="Fisk D.G."/>
            <person name="Binkley G."/>
            <person name="Balakrishnan R."/>
            <person name="Costanzo M.C."/>
            <person name="Dwight S.S."/>
            <person name="Hitz B.C."/>
            <person name="Karra K."/>
            <person name="Nash R.S."/>
            <person name="Weng S."/>
            <person name="Wong E.D."/>
            <person name="Lloyd P."/>
            <person name="Skrzypek M.S."/>
            <person name="Miyasato S.R."/>
            <person name="Simison M."/>
            <person name="Cherry J.M."/>
        </authorList>
    </citation>
    <scope>GENOME REANNOTATION</scope>
    <source>
        <strain>ATCC 204508 / S288c</strain>
    </source>
</reference>
<reference key="3">
    <citation type="journal article" date="2007" name="Genome Res.">
        <title>Approaching a complete repository of sequence-verified protein-encoding clones for Saccharomyces cerevisiae.</title>
        <authorList>
            <person name="Hu Y."/>
            <person name="Rolfs A."/>
            <person name="Bhullar B."/>
            <person name="Murthy T.V.S."/>
            <person name="Zhu C."/>
            <person name="Berger M.F."/>
            <person name="Camargo A.A."/>
            <person name="Kelley F."/>
            <person name="McCarron S."/>
            <person name="Jepson D."/>
            <person name="Richardson A."/>
            <person name="Raphael J."/>
            <person name="Moreira D."/>
            <person name="Taycher E."/>
            <person name="Zuo D."/>
            <person name="Mohr S."/>
            <person name="Kane M.F."/>
            <person name="Williamson J."/>
            <person name="Simpson A.J.G."/>
            <person name="Bulyk M.L."/>
            <person name="Harlow E."/>
            <person name="Marsischky G."/>
            <person name="Kolodner R.D."/>
            <person name="LaBaer J."/>
        </authorList>
    </citation>
    <scope>NUCLEOTIDE SEQUENCE [GENOMIC DNA]</scope>
    <source>
        <strain>ATCC 204508 / S288c</strain>
    </source>
</reference>
<reference key="4">
    <citation type="journal article" date="2003" name="Nature">
        <title>Global analysis of protein localization in budding yeast.</title>
        <authorList>
            <person name="Huh W.-K."/>
            <person name="Falvo J.V."/>
            <person name="Gerke L.C."/>
            <person name="Carroll A.S."/>
            <person name="Howson R.W."/>
            <person name="Weissman J.S."/>
            <person name="O'Shea E.K."/>
        </authorList>
    </citation>
    <scope>SUBCELLULAR LOCATION [LARGE SCALE ANALYSIS]</scope>
</reference>
<reference key="5">
    <citation type="journal article" date="2003" name="Nature">
        <title>Global analysis of protein expression in yeast.</title>
        <authorList>
            <person name="Ghaemmaghami S."/>
            <person name="Huh W.-K."/>
            <person name="Bower K."/>
            <person name="Howson R.W."/>
            <person name="Belle A."/>
            <person name="Dephoure N."/>
            <person name="O'Shea E.K."/>
            <person name="Weissman J.S."/>
        </authorList>
    </citation>
    <scope>LEVEL OF PROTEIN EXPRESSION [LARGE SCALE ANALYSIS]</scope>
</reference>
<reference key="6">
    <citation type="journal article" date="2004" name="Nucleic Acids Res.">
        <title>RNase H2 of Saccharomyces cerevisiae is a complex of three proteins.</title>
        <authorList>
            <person name="Jeong H.-S."/>
            <person name="Backlund P.S."/>
            <person name="Chen H.-C."/>
            <person name="Karavanov A.A."/>
            <person name="Crouch R.J."/>
        </authorList>
    </citation>
    <scope>PROTEIN SEQUENCE OF N-TERMINUS</scope>
    <scope>IDENTIFICATION BY MASS SPECTROMETRY</scope>
    <scope>INTERACTION WITH RNH201 AND RNH203</scope>
</reference>
<reference key="7">
    <citation type="journal article" date="2004" name="Nucleic Acids Res.">
        <authorList>
            <person name="Jeong H.-S."/>
            <person name="Backlund P.S."/>
            <person name="Chen H.-C."/>
            <person name="Karavanov A.A."/>
            <person name="Crouch R.J."/>
        </authorList>
    </citation>
    <scope>ERRATUM OF PUBMED:14734815</scope>
</reference>
<reference key="8">
    <citation type="journal article" date="2005" name="Curr. Genet.">
        <title>Roles of SGS1, MUS81, and RAD51 in the repair of lagging-strand replication defects in Saccharomyces cerevisiae.</title>
        <authorList>
            <person name="Ii M."/>
            <person name="Brill S.J."/>
        </authorList>
    </citation>
    <scope>FUNCTION</scope>
</reference>
<reference key="9">
    <citation type="journal article" date="2012" name="Proc. Natl. Acad. Sci. U.S.A.">
        <title>N-terminal acetylome analyses and functional insights of the N-terminal acetyltransferase NatB.</title>
        <authorList>
            <person name="Van Damme P."/>
            <person name="Lasa M."/>
            <person name="Polevoda B."/>
            <person name="Gazquez C."/>
            <person name="Elosegui-Artola A."/>
            <person name="Kim D.S."/>
            <person name="De Juan-Pardo E."/>
            <person name="Demeyer K."/>
            <person name="Hole K."/>
            <person name="Larrea E."/>
            <person name="Timmerman E."/>
            <person name="Prieto J."/>
            <person name="Arnesen T."/>
            <person name="Sherman F."/>
            <person name="Gevaert K."/>
            <person name="Aldabe R."/>
        </authorList>
    </citation>
    <scope>IDENTIFICATION BY MASS SPECTROMETRY [LARGE SCALE ANALYSIS]</scope>
</reference>
<sequence>MTVSNIGGEERLIILPDDYETSKTINTFTLPPPSNITSKPRIELFENINGKLYEIRSFQFGKGPSYSHEEDLANDKYHYTKENHPIKSTFIVNTSDPTDGYVFNSSKIHFCSLYDIAFSLIGFYYRNSVSADEQDYSNSSDTGENQKSNSKTNEKFLTVRDYHDFLTDNHDKNWENISLSRLKSGLAKVSETIEEAGDVYYKITSAMITQFLLGKVSKIVENFPPSIPTLKNAPTEIKQCYKVVMATNLLVSLIPRAAYHNLLTFSPTMDSGCLNPDIKASFIELENYETTNELQNAERELLMKSAMNVGLNSNGRVSLPVKKVTKKIVQNKKPKVAIGKGAIDGFFKRK</sequence>
<comment type="function">
    <text evidence="4">Non catalytic subunit of RNase H2, an endonuclease that specifically degrades the RNA of RNA:DNA hybrids. Participates in DNA replication, possibly by mediating the removal of lagging-strand Okazaki fragment RNA primers during DNA replication. Mediates the excision of single ribonucleotides from DNA:RNA duplexes.</text>
</comment>
<comment type="subunit">
    <text>The RNase 2 complex is a heterotrimer composed of the catalytic subunit RNH201 and of the non-catalytic subunits RNH202 and RNH203.</text>
</comment>
<comment type="interaction">
    <interactant intactId="EBI-33940">
        <id>Q05635</id>
    </interactant>
    <interactant intactId="EBI-15663">
        <id>P53942</id>
        <label>RNH201</label>
    </interactant>
    <organismsDiffer>false</organismsDiffer>
    <experiments>4</experiments>
</comment>
<comment type="interaction">
    <interactant intactId="EBI-33940">
        <id>Q05635</id>
    </interactant>
    <interactant intactId="EBI-33805">
        <id>Q12338</id>
        <label>RNH203</label>
    </interactant>
    <organismsDiffer>false</organismsDiffer>
    <experiments>3</experiments>
</comment>
<comment type="subcellular location">
    <subcellularLocation>
        <location evidence="2">Nucleus</location>
    </subcellularLocation>
</comment>
<comment type="miscellaneous">
    <text evidence="3">Present with 2340 molecules/cell in log phase SD medium.</text>
</comment>
<comment type="similarity">
    <text evidence="5">Belongs to the RNase H2 subunit B family. Highly divergent.</text>
</comment>
<organism>
    <name type="scientific">Saccharomyces cerevisiae (strain ATCC 204508 / S288c)</name>
    <name type="common">Baker's yeast</name>
    <dbReference type="NCBI Taxonomy" id="559292"/>
    <lineage>
        <taxon>Eukaryota</taxon>
        <taxon>Fungi</taxon>
        <taxon>Dikarya</taxon>
        <taxon>Ascomycota</taxon>
        <taxon>Saccharomycotina</taxon>
        <taxon>Saccharomycetes</taxon>
        <taxon>Saccharomycetales</taxon>
        <taxon>Saccharomycetaceae</taxon>
        <taxon>Saccharomyces</taxon>
    </lineage>
</organism>
<dbReference type="EMBL" id="U51030">
    <property type="protein sequence ID" value="AAB64447.1"/>
    <property type="molecule type" value="Genomic_DNA"/>
</dbReference>
<dbReference type="EMBL" id="AY557789">
    <property type="protein sequence ID" value="AAS56115.1"/>
    <property type="molecule type" value="Genomic_DNA"/>
</dbReference>
<dbReference type="EMBL" id="BK006938">
    <property type="protein sequence ID" value="DAA12119.1"/>
    <property type="molecule type" value="Genomic_DNA"/>
</dbReference>
<dbReference type="PIR" id="S70135">
    <property type="entry name" value="S70135"/>
</dbReference>
<dbReference type="RefSeq" id="NP_010565.3">
    <property type="nucleotide sequence ID" value="NM_001180587.3"/>
</dbReference>
<dbReference type="BioGRID" id="32332">
    <property type="interactions" value="147"/>
</dbReference>
<dbReference type="ComplexPortal" id="CPX-1720">
    <property type="entry name" value="RNase H2 complex"/>
</dbReference>
<dbReference type="DIP" id="DIP-1838N"/>
<dbReference type="FunCoup" id="Q05635">
    <property type="interactions" value="125"/>
</dbReference>
<dbReference type="IntAct" id="Q05635">
    <property type="interactions" value="6"/>
</dbReference>
<dbReference type="MINT" id="Q05635"/>
<dbReference type="STRING" id="4932.YDR279W"/>
<dbReference type="iPTMnet" id="Q05635"/>
<dbReference type="PaxDb" id="4932-YDR279W"/>
<dbReference type="PeptideAtlas" id="Q05635"/>
<dbReference type="EnsemblFungi" id="YDR279W_mRNA">
    <property type="protein sequence ID" value="YDR279W"/>
    <property type="gene ID" value="YDR279W"/>
</dbReference>
<dbReference type="GeneID" id="851873"/>
<dbReference type="KEGG" id="sce:YDR279W"/>
<dbReference type="AGR" id="SGD:S000002687"/>
<dbReference type="SGD" id="S000002687">
    <property type="gene designation" value="RNH202"/>
</dbReference>
<dbReference type="VEuPathDB" id="FungiDB:YDR279W"/>
<dbReference type="eggNOG" id="ENOG502RB2X">
    <property type="taxonomic scope" value="Eukaryota"/>
</dbReference>
<dbReference type="HOGENOM" id="CLU_802143_0_0_1"/>
<dbReference type="InParanoid" id="Q05635"/>
<dbReference type="OMA" id="DNHDKNW"/>
<dbReference type="OrthoDB" id="29098at2759"/>
<dbReference type="BioCyc" id="YEAST:G3O-29844-MONOMER"/>
<dbReference type="BioGRID-ORCS" id="851873">
    <property type="hits" value="0 hits in 10 CRISPR screens"/>
</dbReference>
<dbReference type="PRO" id="PR:Q05635"/>
<dbReference type="Proteomes" id="UP000002311">
    <property type="component" value="Chromosome IV"/>
</dbReference>
<dbReference type="RNAct" id="Q05635">
    <property type="molecule type" value="protein"/>
</dbReference>
<dbReference type="GO" id="GO:0005634">
    <property type="term" value="C:nucleus"/>
    <property type="evidence" value="ECO:0007005"/>
    <property type="project" value="SGD"/>
</dbReference>
<dbReference type="GO" id="GO:0032299">
    <property type="term" value="C:ribonuclease H2 complex"/>
    <property type="evidence" value="ECO:0000314"/>
    <property type="project" value="SGD"/>
</dbReference>
<dbReference type="GO" id="GO:0006298">
    <property type="term" value="P:mismatch repair"/>
    <property type="evidence" value="ECO:0000303"/>
    <property type="project" value="ComplexPortal"/>
</dbReference>
<dbReference type="GO" id="GO:0006401">
    <property type="term" value="P:RNA catabolic process"/>
    <property type="evidence" value="ECO:0000314"/>
    <property type="project" value="SGD"/>
</dbReference>
<dbReference type="CDD" id="cd09270">
    <property type="entry name" value="RNase_H2-B"/>
    <property type="match status" value="1"/>
</dbReference>
<dbReference type="InterPro" id="IPR040456">
    <property type="entry name" value="RNase_H2_suB"/>
</dbReference>
<dbReference type="InterPro" id="IPR019024">
    <property type="entry name" value="RNase_H2_suB_wHTH"/>
</dbReference>
<dbReference type="InterPro" id="IPR041195">
    <property type="entry name" value="Rnh202_N"/>
</dbReference>
<dbReference type="PANTHER" id="PTHR13383">
    <property type="entry name" value="RIBONUCLEASE H2 SUBUNIT B"/>
    <property type="match status" value="1"/>
</dbReference>
<dbReference type="PANTHER" id="PTHR13383:SF11">
    <property type="entry name" value="RIBONUCLEASE H2 SUBUNIT B"/>
    <property type="match status" value="1"/>
</dbReference>
<dbReference type="Pfam" id="PF09468">
    <property type="entry name" value="RNase_H2-Ydr279"/>
    <property type="match status" value="1"/>
</dbReference>
<dbReference type="Pfam" id="PF17745">
    <property type="entry name" value="Ydr279_N"/>
    <property type="match status" value="1"/>
</dbReference>
<keyword id="KW-0903">Direct protein sequencing</keyword>
<keyword id="KW-0539">Nucleus</keyword>
<keyword id="KW-1185">Reference proteome</keyword>